<sequence>MKIMISGGGTGGHIYPALALIETLKKRHPDLQVQYIGTENGLEADLVPRAGVPFKSIQIAGLKRSLSLENVKTAYWFLKAVRALKKDMAAFKPDVVIGTGGFVSGPVVYTAQQLGIPTILHEQNSIPGLTNKFLSKKADRVALSFKGSDVHFPGANVRLIGNPRGSEVLQTEVDEASVREQYRLDDRPIVLVYGGSRGAEAINRAVVEAIPSLSELPINVLYVTGKVHFDAVSKQAPSSDNVHIHPYVYDMPSLLACTSLVISRAGASTISELTALGLPSILVPSPYVTADHQTKNASALVENGAALLVKEEALTGVTLVEAIRQALEQRDEMANASRALGFPDASDALADLVEEVIQ</sequence>
<proteinExistence type="inferred from homology"/>
<evidence type="ECO:0000255" key="1">
    <source>
        <dbReference type="HAMAP-Rule" id="MF_00033"/>
    </source>
</evidence>
<gene>
    <name evidence="1" type="primary">murG</name>
    <name type="ordered locus">EAT1b_2837</name>
</gene>
<feature type="chain" id="PRO_1000202021" description="UDP-N-acetylglucosamine--N-acetylmuramyl-(pentapeptide) pyrophosphoryl-undecaprenol N-acetylglucosamine transferase">
    <location>
        <begin position="1"/>
        <end position="358"/>
    </location>
</feature>
<feature type="binding site" evidence="1">
    <location>
        <begin position="10"/>
        <end position="12"/>
    </location>
    <ligand>
        <name>UDP-N-acetyl-alpha-D-glucosamine</name>
        <dbReference type="ChEBI" id="CHEBI:57705"/>
    </ligand>
</feature>
<feature type="binding site" evidence="1">
    <location>
        <position position="124"/>
    </location>
    <ligand>
        <name>UDP-N-acetyl-alpha-D-glucosamine</name>
        <dbReference type="ChEBI" id="CHEBI:57705"/>
    </ligand>
</feature>
<feature type="binding site" evidence="1">
    <location>
        <position position="196"/>
    </location>
    <ligand>
        <name>UDP-N-acetyl-alpha-D-glucosamine</name>
        <dbReference type="ChEBI" id="CHEBI:57705"/>
    </ligand>
</feature>
<feature type="binding site" evidence="1">
    <location>
        <position position="293"/>
    </location>
    <ligand>
        <name>UDP-N-acetyl-alpha-D-glucosamine</name>
        <dbReference type="ChEBI" id="CHEBI:57705"/>
    </ligand>
</feature>
<accession>C4L5U5</accession>
<reference key="1">
    <citation type="journal article" date="2011" name="J. Bacteriol.">
        <title>Complete genome sequence of the Thermophilic Bacterium Exiguobacterium sp. AT1b.</title>
        <authorList>
            <person name="Vishnivetskaya T.A."/>
            <person name="Lucas S."/>
            <person name="Copeland A."/>
            <person name="Lapidus A."/>
            <person name="Glavina del Rio T."/>
            <person name="Dalin E."/>
            <person name="Tice H."/>
            <person name="Bruce D.C."/>
            <person name="Goodwin L.A."/>
            <person name="Pitluck S."/>
            <person name="Saunders E."/>
            <person name="Brettin T."/>
            <person name="Detter C."/>
            <person name="Han C."/>
            <person name="Larimer F."/>
            <person name="Land M.L."/>
            <person name="Hauser L.J."/>
            <person name="Kyrpides N.C."/>
            <person name="Ovchinnikova G."/>
            <person name="Kathariou S."/>
            <person name="Ramaley R.F."/>
            <person name="Rodrigues D.F."/>
            <person name="Hendrix C."/>
            <person name="Richardson P."/>
            <person name="Tiedje J.M."/>
        </authorList>
    </citation>
    <scope>NUCLEOTIDE SEQUENCE [LARGE SCALE GENOMIC DNA]</scope>
    <source>
        <strain>ATCC BAA-1283 / AT1b</strain>
    </source>
</reference>
<dbReference type="EC" id="2.4.1.227" evidence="1"/>
<dbReference type="EMBL" id="CP001615">
    <property type="protein sequence ID" value="ACQ71751.1"/>
    <property type="molecule type" value="Genomic_DNA"/>
</dbReference>
<dbReference type="RefSeq" id="WP_015881310.1">
    <property type="nucleotide sequence ID" value="NC_012673.1"/>
</dbReference>
<dbReference type="SMR" id="C4L5U5"/>
<dbReference type="STRING" id="360911.EAT1b_2837"/>
<dbReference type="CAZy" id="GT28">
    <property type="family name" value="Glycosyltransferase Family 28"/>
</dbReference>
<dbReference type="KEGG" id="eat:EAT1b_2837"/>
<dbReference type="eggNOG" id="COG0707">
    <property type="taxonomic scope" value="Bacteria"/>
</dbReference>
<dbReference type="HOGENOM" id="CLU_037404_0_1_9"/>
<dbReference type="OrthoDB" id="9808936at2"/>
<dbReference type="UniPathway" id="UPA00219"/>
<dbReference type="Proteomes" id="UP000000716">
    <property type="component" value="Chromosome"/>
</dbReference>
<dbReference type="GO" id="GO:0005886">
    <property type="term" value="C:plasma membrane"/>
    <property type="evidence" value="ECO:0007669"/>
    <property type="project" value="UniProtKB-SubCell"/>
</dbReference>
<dbReference type="GO" id="GO:0051991">
    <property type="term" value="F:UDP-N-acetyl-D-glucosamine:N-acetylmuramoyl-L-alanyl-D-glutamyl-meso-2,6-diaminopimelyl-D-alanyl-D-alanine-diphosphoundecaprenol 4-beta-N-acetylglucosaminlytransferase activity"/>
    <property type="evidence" value="ECO:0007669"/>
    <property type="project" value="RHEA"/>
</dbReference>
<dbReference type="GO" id="GO:0050511">
    <property type="term" value="F:undecaprenyldiphospho-muramoylpentapeptide beta-N-acetylglucosaminyltransferase activity"/>
    <property type="evidence" value="ECO:0007669"/>
    <property type="project" value="UniProtKB-UniRule"/>
</dbReference>
<dbReference type="GO" id="GO:0005975">
    <property type="term" value="P:carbohydrate metabolic process"/>
    <property type="evidence" value="ECO:0007669"/>
    <property type="project" value="InterPro"/>
</dbReference>
<dbReference type="GO" id="GO:0051301">
    <property type="term" value="P:cell division"/>
    <property type="evidence" value="ECO:0007669"/>
    <property type="project" value="UniProtKB-KW"/>
</dbReference>
<dbReference type="GO" id="GO:0071555">
    <property type="term" value="P:cell wall organization"/>
    <property type="evidence" value="ECO:0007669"/>
    <property type="project" value="UniProtKB-KW"/>
</dbReference>
<dbReference type="GO" id="GO:0030259">
    <property type="term" value="P:lipid glycosylation"/>
    <property type="evidence" value="ECO:0007669"/>
    <property type="project" value="UniProtKB-UniRule"/>
</dbReference>
<dbReference type="GO" id="GO:0009252">
    <property type="term" value="P:peptidoglycan biosynthetic process"/>
    <property type="evidence" value="ECO:0007669"/>
    <property type="project" value="UniProtKB-UniRule"/>
</dbReference>
<dbReference type="GO" id="GO:0008360">
    <property type="term" value="P:regulation of cell shape"/>
    <property type="evidence" value="ECO:0007669"/>
    <property type="project" value="UniProtKB-KW"/>
</dbReference>
<dbReference type="CDD" id="cd03785">
    <property type="entry name" value="GT28_MurG"/>
    <property type="match status" value="1"/>
</dbReference>
<dbReference type="Gene3D" id="3.40.50.2000">
    <property type="entry name" value="Glycogen Phosphorylase B"/>
    <property type="match status" value="2"/>
</dbReference>
<dbReference type="HAMAP" id="MF_00033">
    <property type="entry name" value="MurG"/>
    <property type="match status" value="1"/>
</dbReference>
<dbReference type="InterPro" id="IPR006009">
    <property type="entry name" value="GlcNAc_MurG"/>
</dbReference>
<dbReference type="InterPro" id="IPR007235">
    <property type="entry name" value="Glyco_trans_28_C"/>
</dbReference>
<dbReference type="InterPro" id="IPR004276">
    <property type="entry name" value="GlycoTrans_28_N"/>
</dbReference>
<dbReference type="NCBIfam" id="TIGR01133">
    <property type="entry name" value="murG"/>
    <property type="match status" value="1"/>
</dbReference>
<dbReference type="PANTHER" id="PTHR21015:SF22">
    <property type="entry name" value="GLYCOSYLTRANSFERASE"/>
    <property type="match status" value="1"/>
</dbReference>
<dbReference type="PANTHER" id="PTHR21015">
    <property type="entry name" value="UDP-N-ACETYLGLUCOSAMINE--N-ACETYLMURAMYL-(PENTAPEPTIDE) PYROPHOSPHORYL-UNDECAPRENOL N-ACETYLGLUCOSAMINE TRANSFERASE 1"/>
    <property type="match status" value="1"/>
</dbReference>
<dbReference type="Pfam" id="PF04101">
    <property type="entry name" value="Glyco_tran_28_C"/>
    <property type="match status" value="1"/>
</dbReference>
<dbReference type="Pfam" id="PF03033">
    <property type="entry name" value="Glyco_transf_28"/>
    <property type="match status" value="1"/>
</dbReference>
<dbReference type="SUPFAM" id="SSF53756">
    <property type="entry name" value="UDP-Glycosyltransferase/glycogen phosphorylase"/>
    <property type="match status" value="1"/>
</dbReference>
<keyword id="KW-0131">Cell cycle</keyword>
<keyword id="KW-0132">Cell division</keyword>
<keyword id="KW-1003">Cell membrane</keyword>
<keyword id="KW-0133">Cell shape</keyword>
<keyword id="KW-0961">Cell wall biogenesis/degradation</keyword>
<keyword id="KW-0328">Glycosyltransferase</keyword>
<keyword id="KW-0472">Membrane</keyword>
<keyword id="KW-0573">Peptidoglycan synthesis</keyword>
<keyword id="KW-0808">Transferase</keyword>
<organism>
    <name type="scientific">Exiguobacterium sp. (strain ATCC BAA-1283 / AT1b)</name>
    <dbReference type="NCBI Taxonomy" id="360911"/>
    <lineage>
        <taxon>Bacteria</taxon>
        <taxon>Bacillati</taxon>
        <taxon>Bacillota</taxon>
        <taxon>Bacilli</taxon>
        <taxon>Bacillales</taxon>
        <taxon>Bacillales Family XII. Incertae Sedis</taxon>
        <taxon>Exiguobacterium</taxon>
    </lineage>
</organism>
<comment type="function">
    <text evidence="1">Cell wall formation. Catalyzes the transfer of a GlcNAc subunit on undecaprenyl-pyrophosphoryl-MurNAc-pentapeptide (lipid intermediate I) to form undecaprenyl-pyrophosphoryl-MurNAc-(pentapeptide)GlcNAc (lipid intermediate II).</text>
</comment>
<comment type="catalytic activity">
    <reaction evidence="1">
        <text>di-trans,octa-cis-undecaprenyl diphospho-N-acetyl-alpha-D-muramoyl-L-alanyl-D-glutamyl-meso-2,6-diaminopimeloyl-D-alanyl-D-alanine + UDP-N-acetyl-alpha-D-glucosamine = di-trans,octa-cis-undecaprenyl diphospho-[N-acetyl-alpha-D-glucosaminyl-(1-&gt;4)]-N-acetyl-alpha-D-muramoyl-L-alanyl-D-glutamyl-meso-2,6-diaminopimeloyl-D-alanyl-D-alanine + UDP + H(+)</text>
        <dbReference type="Rhea" id="RHEA:31227"/>
        <dbReference type="ChEBI" id="CHEBI:15378"/>
        <dbReference type="ChEBI" id="CHEBI:57705"/>
        <dbReference type="ChEBI" id="CHEBI:58223"/>
        <dbReference type="ChEBI" id="CHEBI:61387"/>
        <dbReference type="ChEBI" id="CHEBI:61388"/>
        <dbReference type="EC" id="2.4.1.227"/>
    </reaction>
</comment>
<comment type="pathway">
    <text evidence="1">Cell wall biogenesis; peptidoglycan biosynthesis.</text>
</comment>
<comment type="subcellular location">
    <subcellularLocation>
        <location evidence="1">Cell membrane</location>
        <topology evidence="1">Peripheral membrane protein</topology>
        <orientation evidence="1">Cytoplasmic side</orientation>
    </subcellularLocation>
</comment>
<comment type="similarity">
    <text evidence="1">Belongs to the glycosyltransferase 28 family. MurG subfamily.</text>
</comment>
<name>MURG_EXISA</name>
<protein>
    <recommendedName>
        <fullName evidence="1">UDP-N-acetylglucosamine--N-acetylmuramyl-(pentapeptide) pyrophosphoryl-undecaprenol N-acetylglucosamine transferase</fullName>
        <ecNumber evidence="1">2.4.1.227</ecNumber>
    </recommendedName>
    <alternativeName>
        <fullName evidence="1">Undecaprenyl-PP-MurNAc-pentapeptide-UDPGlcNAc GlcNAc transferase</fullName>
    </alternativeName>
</protein>